<accession>Q5UY89</accession>
<reference key="1">
    <citation type="journal article" date="2004" name="Genome Res.">
        <title>Genome sequence of Haloarcula marismortui: a halophilic archaeon from the Dead Sea.</title>
        <authorList>
            <person name="Baliga N.S."/>
            <person name="Bonneau R."/>
            <person name="Facciotti M.T."/>
            <person name="Pan M."/>
            <person name="Glusman G."/>
            <person name="Deutsch E.W."/>
            <person name="Shannon P."/>
            <person name="Chiu Y."/>
            <person name="Weng R.S."/>
            <person name="Gan R.R."/>
            <person name="Hung P."/>
            <person name="Date S.V."/>
            <person name="Marcotte E."/>
            <person name="Hood L."/>
            <person name="Ng W.V."/>
        </authorList>
    </citation>
    <scope>NUCLEOTIDE SEQUENCE [LARGE SCALE GENOMIC DNA]</scope>
    <source>
        <strain>ATCC 43049 / DSM 3752 / JCM 8966 / VKM B-1809</strain>
    </source>
</reference>
<proteinExistence type="inferred from homology"/>
<gene>
    <name evidence="1" type="primary">uvrC</name>
    <name type="ordered locus">rrnAC3041</name>
</gene>
<sequence>MDADEVRERAGSLPREPGVYLFEQGRDDKRRVLYVGKAVDLRDRVRSYADPRSERIAKMVERAETIDFAVTDTETQALLLEANLIKRHRPPYNVRLKDDKSYPLVQLTDHPVPRIEVTRDPADGATVYGPFTDKGRVETVVKALREAYGLRGCSDHKYSNRDRPCLDYEMGICTAPCTGEIGEADYAEDAEAVTRYFEGETGVLADPLRREMEAAAQNQEFERAANLRDKLGAVEALHGEGDTAVSDSGGYQTTDVLGAAIEGERAIVARLHAEGGKLVERDRHTLEAPDGEGTAGVYRAFIPQYYAERELPDRILCAEAPADPDIEAWLESEGVTLGVPGAGREATLVDLALKNARQRGGTDDESGRLADALGIDHPSRIEGFDVSHAQGRSAVGSNVTFVDETPEKSDYRRKKLTEQNDDYANMRELLRWRATRAVEGRDDRPDPDLLLIDGGDGQLGAARDALAETGWDVPAIALAKDEELVITPDRVYDWNDDAPQLHLLQRIRDEAHRFAVQYHQTLRDEVSTTLDDVPGIGPETRKRLLRRFGSVDSVRAASDEELTAIDGIGEQTAETIRTRLQ</sequence>
<protein>
    <recommendedName>
        <fullName evidence="1">UvrABC system protein C</fullName>
        <shortName evidence="1">Protein UvrC</shortName>
    </recommendedName>
    <alternativeName>
        <fullName evidence="1">Excinuclease ABC subunit C</fullName>
    </alternativeName>
</protein>
<name>UVRC_HALMA</name>
<dbReference type="EMBL" id="AY596297">
    <property type="protein sequence ID" value="AAV47764.1"/>
    <property type="molecule type" value="Genomic_DNA"/>
</dbReference>
<dbReference type="RefSeq" id="WP_011224582.1">
    <property type="nucleotide sequence ID" value="NC_006396.1"/>
</dbReference>
<dbReference type="SMR" id="Q5UY89"/>
<dbReference type="STRING" id="272569.rrnAC3041"/>
<dbReference type="PaxDb" id="272569-rrnAC3041"/>
<dbReference type="EnsemblBacteria" id="AAV47764">
    <property type="protein sequence ID" value="AAV47764"/>
    <property type="gene ID" value="rrnAC3041"/>
</dbReference>
<dbReference type="GeneID" id="40153864"/>
<dbReference type="KEGG" id="hma:rrnAC3041"/>
<dbReference type="PATRIC" id="fig|272569.17.peg.3591"/>
<dbReference type="eggNOG" id="arCOG00873">
    <property type="taxonomic scope" value="Archaea"/>
</dbReference>
<dbReference type="eggNOG" id="arCOG04753">
    <property type="taxonomic scope" value="Archaea"/>
</dbReference>
<dbReference type="HOGENOM" id="CLU_014841_3_1_2"/>
<dbReference type="Proteomes" id="UP000001169">
    <property type="component" value="Chromosome I"/>
</dbReference>
<dbReference type="GO" id="GO:0005737">
    <property type="term" value="C:cytoplasm"/>
    <property type="evidence" value="ECO:0007669"/>
    <property type="project" value="UniProtKB-SubCell"/>
</dbReference>
<dbReference type="GO" id="GO:0009380">
    <property type="term" value="C:excinuclease repair complex"/>
    <property type="evidence" value="ECO:0007669"/>
    <property type="project" value="InterPro"/>
</dbReference>
<dbReference type="GO" id="GO:0003677">
    <property type="term" value="F:DNA binding"/>
    <property type="evidence" value="ECO:0007669"/>
    <property type="project" value="UniProtKB-UniRule"/>
</dbReference>
<dbReference type="GO" id="GO:0009381">
    <property type="term" value="F:excinuclease ABC activity"/>
    <property type="evidence" value="ECO:0007669"/>
    <property type="project" value="UniProtKB-UniRule"/>
</dbReference>
<dbReference type="GO" id="GO:0006289">
    <property type="term" value="P:nucleotide-excision repair"/>
    <property type="evidence" value="ECO:0007669"/>
    <property type="project" value="UniProtKB-UniRule"/>
</dbReference>
<dbReference type="GO" id="GO:0009432">
    <property type="term" value="P:SOS response"/>
    <property type="evidence" value="ECO:0007669"/>
    <property type="project" value="UniProtKB-UniRule"/>
</dbReference>
<dbReference type="CDD" id="cd10434">
    <property type="entry name" value="GIY-YIG_UvrC_Cho"/>
    <property type="match status" value="1"/>
</dbReference>
<dbReference type="FunFam" id="3.30.420.340:FF:000004">
    <property type="entry name" value="UvrABC system protein C"/>
    <property type="match status" value="1"/>
</dbReference>
<dbReference type="FunFam" id="3.40.1440.10:FF:000001">
    <property type="entry name" value="UvrABC system protein C"/>
    <property type="match status" value="1"/>
</dbReference>
<dbReference type="Gene3D" id="1.10.150.20">
    <property type="entry name" value="5' to 3' exonuclease, C-terminal subdomain"/>
    <property type="match status" value="1"/>
</dbReference>
<dbReference type="Gene3D" id="3.40.1440.10">
    <property type="entry name" value="GIY-YIG endonuclease"/>
    <property type="match status" value="1"/>
</dbReference>
<dbReference type="Gene3D" id="4.10.860.10">
    <property type="entry name" value="UVR domain"/>
    <property type="match status" value="1"/>
</dbReference>
<dbReference type="Gene3D" id="3.30.420.340">
    <property type="entry name" value="UvrC, RNAse H endonuclease domain"/>
    <property type="match status" value="1"/>
</dbReference>
<dbReference type="HAMAP" id="MF_00203">
    <property type="entry name" value="UvrC"/>
    <property type="match status" value="1"/>
</dbReference>
<dbReference type="InterPro" id="IPR000305">
    <property type="entry name" value="GIY-YIG_endonuc"/>
</dbReference>
<dbReference type="InterPro" id="IPR035901">
    <property type="entry name" value="GIY-YIG_endonuc_sf"/>
</dbReference>
<dbReference type="InterPro" id="IPR047296">
    <property type="entry name" value="GIY-YIG_UvrC_Cho"/>
</dbReference>
<dbReference type="InterPro" id="IPR003583">
    <property type="entry name" value="Hlx-hairpin-Hlx_DNA-bd_motif"/>
</dbReference>
<dbReference type="InterPro" id="IPR010994">
    <property type="entry name" value="RuvA_2-like"/>
</dbReference>
<dbReference type="InterPro" id="IPR001943">
    <property type="entry name" value="UVR_dom"/>
</dbReference>
<dbReference type="InterPro" id="IPR036876">
    <property type="entry name" value="UVR_dom_sf"/>
</dbReference>
<dbReference type="InterPro" id="IPR050066">
    <property type="entry name" value="UvrABC_protein_C"/>
</dbReference>
<dbReference type="InterPro" id="IPR004791">
    <property type="entry name" value="UvrC"/>
</dbReference>
<dbReference type="InterPro" id="IPR001162">
    <property type="entry name" value="UvrC_RNase_H_dom"/>
</dbReference>
<dbReference type="InterPro" id="IPR038476">
    <property type="entry name" value="UvrC_RNase_H_dom_sf"/>
</dbReference>
<dbReference type="NCBIfam" id="NF011262">
    <property type="entry name" value="PRK14668.1"/>
    <property type="match status" value="1"/>
</dbReference>
<dbReference type="NCBIfam" id="TIGR00194">
    <property type="entry name" value="uvrC"/>
    <property type="match status" value="1"/>
</dbReference>
<dbReference type="PANTHER" id="PTHR30562:SF1">
    <property type="entry name" value="UVRABC SYSTEM PROTEIN C"/>
    <property type="match status" value="1"/>
</dbReference>
<dbReference type="PANTHER" id="PTHR30562">
    <property type="entry name" value="UVRC/OXIDOREDUCTASE"/>
    <property type="match status" value="1"/>
</dbReference>
<dbReference type="Pfam" id="PF01541">
    <property type="entry name" value="GIY-YIG"/>
    <property type="match status" value="1"/>
</dbReference>
<dbReference type="Pfam" id="PF14520">
    <property type="entry name" value="HHH_5"/>
    <property type="match status" value="1"/>
</dbReference>
<dbReference type="Pfam" id="PF02151">
    <property type="entry name" value="UVR"/>
    <property type="match status" value="1"/>
</dbReference>
<dbReference type="Pfam" id="PF22920">
    <property type="entry name" value="UvrC_RNaseH"/>
    <property type="match status" value="1"/>
</dbReference>
<dbReference type="Pfam" id="PF08459">
    <property type="entry name" value="UvrC_RNaseH_dom"/>
    <property type="match status" value="1"/>
</dbReference>
<dbReference type="SMART" id="SM00465">
    <property type="entry name" value="GIYc"/>
    <property type="match status" value="1"/>
</dbReference>
<dbReference type="SMART" id="SM00278">
    <property type="entry name" value="HhH1"/>
    <property type="match status" value="2"/>
</dbReference>
<dbReference type="SUPFAM" id="SSF46600">
    <property type="entry name" value="C-terminal UvrC-binding domain of UvrB"/>
    <property type="match status" value="1"/>
</dbReference>
<dbReference type="SUPFAM" id="SSF82771">
    <property type="entry name" value="GIY-YIG endonuclease"/>
    <property type="match status" value="1"/>
</dbReference>
<dbReference type="SUPFAM" id="SSF47781">
    <property type="entry name" value="RuvA domain 2-like"/>
    <property type="match status" value="1"/>
</dbReference>
<dbReference type="PROSITE" id="PS50164">
    <property type="entry name" value="GIY_YIG"/>
    <property type="match status" value="1"/>
</dbReference>
<dbReference type="PROSITE" id="PS50151">
    <property type="entry name" value="UVR"/>
    <property type="match status" value="1"/>
</dbReference>
<dbReference type="PROSITE" id="PS50165">
    <property type="entry name" value="UVRC"/>
    <property type="match status" value="1"/>
</dbReference>
<comment type="function">
    <text evidence="1">The UvrABC repair system catalyzes the recognition and processing of DNA lesions. UvrC both incises the 5' and 3' sides of the lesion. The N-terminal half is responsible for the 3' incision and the C-terminal half is responsible for the 5' incision.</text>
</comment>
<comment type="subunit">
    <text evidence="1">Interacts with UvrB in an incision complex.</text>
</comment>
<comment type="subcellular location">
    <subcellularLocation>
        <location evidence="1">Cytoplasm</location>
    </subcellularLocation>
</comment>
<comment type="similarity">
    <text evidence="1">Belongs to the UvrC family.</text>
</comment>
<feature type="chain" id="PRO_0000138365" description="UvrABC system protein C">
    <location>
        <begin position="1"/>
        <end position="581"/>
    </location>
</feature>
<feature type="domain" description="GIY-YIG" evidence="1">
    <location>
        <begin position="15"/>
        <end position="94"/>
    </location>
</feature>
<feature type="domain" description="UVR" evidence="1">
    <location>
        <begin position="202"/>
        <end position="237"/>
    </location>
</feature>
<organism>
    <name type="scientific">Haloarcula marismortui (strain ATCC 43049 / DSM 3752 / JCM 8966 / VKM B-1809)</name>
    <name type="common">Halobacterium marismortui</name>
    <dbReference type="NCBI Taxonomy" id="272569"/>
    <lineage>
        <taxon>Archaea</taxon>
        <taxon>Methanobacteriati</taxon>
        <taxon>Methanobacteriota</taxon>
        <taxon>Stenosarchaea group</taxon>
        <taxon>Halobacteria</taxon>
        <taxon>Halobacteriales</taxon>
        <taxon>Haloarculaceae</taxon>
        <taxon>Haloarcula</taxon>
    </lineage>
</organism>
<keyword id="KW-0963">Cytoplasm</keyword>
<keyword id="KW-0227">DNA damage</keyword>
<keyword id="KW-0228">DNA excision</keyword>
<keyword id="KW-0234">DNA repair</keyword>
<keyword id="KW-0267">Excision nuclease</keyword>
<keyword id="KW-1185">Reference proteome</keyword>
<keyword id="KW-0742">SOS response</keyword>
<evidence type="ECO:0000255" key="1">
    <source>
        <dbReference type="HAMAP-Rule" id="MF_00203"/>
    </source>
</evidence>